<organism>
    <name type="scientific">Streptococcus pneumoniae serotype 4 (strain ATCC BAA-334 / TIGR4)</name>
    <dbReference type="NCBI Taxonomy" id="170187"/>
    <lineage>
        <taxon>Bacteria</taxon>
        <taxon>Bacillati</taxon>
        <taxon>Bacillota</taxon>
        <taxon>Bacilli</taxon>
        <taxon>Lactobacillales</taxon>
        <taxon>Streptococcaceae</taxon>
        <taxon>Streptococcus</taxon>
    </lineage>
</organism>
<feature type="chain" id="PRO_0000199852" description="Phosphopentomutase">
    <location>
        <begin position="1"/>
        <end position="403"/>
    </location>
</feature>
<feature type="binding site" evidence="1">
    <location>
        <position position="13"/>
    </location>
    <ligand>
        <name>Mn(2+)</name>
        <dbReference type="ChEBI" id="CHEBI:29035"/>
        <label>1</label>
    </ligand>
</feature>
<feature type="binding site" evidence="1">
    <location>
        <position position="298"/>
    </location>
    <ligand>
        <name>Mn(2+)</name>
        <dbReference type="ChEBI" id="CHEBI:29035"/>
        <label>2</label>
    </ligand>
</feature>
<feature type="binding site" evidence="1">
    <location>
        <position position="303"/>
    </location>
    <ligand>
        <name>Mn(2+)</name>
        <dbReference type="ChEBI" id="CHEBI:29035"/>
        <label>2</label>
    </ligand>
</feature>
<feature type="binding site" evidence="1">
    <location>
        <position position="339"/>
    </location>
    <ligand>
        <name>Mn(2+)</name>
        <dbReference type="ChEBI" id="CHEBI:29035"/>
        <label>1</label>
    </ligand>
</feature>
<feature type="binding site" evidence="1">
    <location>
        <position position="340"/>
    </location>
    <ligand>
        <name>Mn(2+)</name>
        <dbReference type="ChEBI" id="CHEBI:29035"/>
        <label>1</label>
    </ligand>
</feature>
<feature type="binding site" evidence="1">
    <location>
        <position position="351"/>
    </location>
    <ligand>
        <name>Mn(2+)</name>
        <dbReference type="ChEBI" id="CHEBI:29035"/>
        <label>2</label>
    </ligand>
</feature>
<keyword id="KW-0963">Cytoplasm</keyword>
<keyword id="KW-0413">Isomerase</keyword>
<keyword id="KW-0464">Manganese</keyword>
<keyword id="KW-0479">Metal-binding</keyword>
<keyword id="KW-1185">Reference proteome</keyword>
<evidence type="ECO:0000255" key="1">
    <source>
        <dbReference type="HAMAP-Rule" id="MF_00740"/>
    </source>
</evidence>
<gene>
    <name evidence="1" type="primary">deoB</name>
    <name type="ordered locus">SP_0829</name>
</gene>
<comment type="function">
    <text evidence="1">Isomerase that catalyzes the conversion of deoxy-ribose 1-phosphate (dRib-1-P) and ribose 1-phosphate (Rib-1-P) to deoxy-ribose 5-phosphate (dRib-5-P) and ribose 5-phosphate (Rib-5-P), respectively.</text>
</comment>
<comment type="catalytic activity">
    <reaction evidence="1">
        <text>2-deoxy-alpha-D-ribose 1-phosphate = 2-deoxy-D-ribose 5-phosphate</text>
        <dbReference type="Rhea" id="RHEA:27658"/>
        <dbReference type="ChEBI" id="CHEBI:57259"/>
        <dbReference type="ChEBI" id="CHEBI:62877"/>
        <dbReference type="EC" id="5.4.2.7"/>
    </reaction>
</comment>
<comment type="catalytic activity">
    <reaction evidence="1">
        <text>alpha-D-ribose 1-phosphate = D-ribose 5-phosphate</text>
        <dbReference type="Rhea" id="RHEA:18793"/>
        <dbReference type="ChEBI" id="CHEBI:57720"/>
        <dbReference type="ChEBI" id="CHEBI:78346"/>
        <dbReference type="EC" id="5.4.2.7"/>
    </reaction>
</comment>
<comment type="cofactor">
    <cofactor evidence="1">
        <name>Mn(2+)</name>
        <dbReference type="ChEBI" id="CHEBI:29035"/>
    </cofactor>
    <text evidence="1">Binds 2 manganese ions.</text>
</comment>
<comment type="pathway">
    <text evidence="1">Carbohydrate degradation; 2-deoxy-D-ribose 1-phosphate degradation; D-glyceraldehyde 3-phosphate and acetaldehyde from 2-deoxy-alpha-D-ribose 1-phosphate: step 1/2.</text>
</comment>
<comment type="subcellular location">
    <subcellularLocation>
        <location evidence="1">Cytoplasm</location>
    </subcellularLocation>
</comment>
<comment type="similarity">
    <text evidence="1">Belongs to the phosphopentomutase family.</text>
</comment>
<name>DEOB_STRPN</name>
<protein>
    <recommendedName>
        <fullName evidence="1">Phosphopentomutase</fullName>
        <ecNumber evidence="1">5.4.2.7</ecNumber>
    </recommendedName>
    <alternativeName>
        <fullName evidence="1">Phosphodeoxyribomutase</fullName>
    </alternativeName>
</protein>
<proteinExistence type="inferred from homology"/>
<sequence>MSKFNRIHLVVLDSVGIGAAPDANNFVNAGVPDGASDTLGHISKTVGLNVPNMAKIGLGNIPRETPLKTVAAESNPTGYATKLEEVSLGKDTMTGHWEIMGLNITEPFDTFWNGFPEEILTKIEEFSGRKVIREANKPYSGTAVIYDFGPRQMETGELIIYTSADPVLQIAAHEDIIPLDELYRICEYARSITLERPALLGRIIARPYVGEPGNFTRTANRRDLAVSPFFPTVLDKLNEAGIDTYAVGKINDIFNGAGINHDMGHNKSNSHGIDTLLKTMGLAEFEKGFSFTNLVDFDALYGHRRNAHGYRDCLHEFDERLPEIIAAMRENDLLLITADHGNDPTYAGTDHTREYIPLLAYSPAFKGNGLIPVGHFADISATVADNFGVETAMIGESFLDKLV</sequence>
<dbReference type="EC" id="5.4.2.7" evidence="1"/>
<dbReference type="EMBL" id="AE005672">
    <property type="protein sequence ID" value="AAK74960.1"/>
    <property type="molecule type" value="Genomic_DNA"/>
</dbReference>
<dbReference type="PIR" id="G95095">
    <property type="entry name" value="G95095"/>
</dbReference>
<dbReference type="RefSeq" id="WP_000033106.1">
    <property type="nucleotide sequence ID" value="NC_003028.3"/>
</dbReference>
<dbReference type="SMR" id="Q97RI6"/>
<dbReference type="PaxDb" id="170187-SP_0829"/>
<dbReference type="EnsemblBacteria" id="AAK74960">
    <property type="protein sequence ID" value="AAK74960"/>
    <property type="gene ID" value="SP_0829"/>
</dbReference>
<dbReference type="KEGG" id="spn:SP_0829"/>
<dbReference type="eggNOG" id="COG1015">
    <property type="taxonomic scope" value="Bacteria"/>
</dbReference>
<dbReference type="PhylomeDB" id="Q97RI6"/>
<dbReference type="BioCyc" id="SPNE170187:G1FZB-847-MONOMER"/>
<dbReference type="UniPathway" id="UPA00002">
    <property type="reaction ID" value="UER00467"/>
</dbReference>
<dbReference type="Proteomes" id="UP000000585">
    <property type="component" value="Chromosome"/>
</dbReference>
<dbReference type="GO" id="GO:0005829">
    <property type="term" value="C:cytosol"/>
    <property type="evidence" value="ECO:0007669"/>
    <property type="project" value="TreeGrafter"/>
</dbReference>
<dbReference type="GO" id="GO:0000287">
    <property type="term" value="F:magnesium ion binding"/>
    <property type="evidence" value="ECO:0007669"/>
    <property type="project" value="InterPro"/>
</dbReference>
<dbReference type="GO" id="GO:0030145">
    <property type="term" value="F:manganese ion binding"/>
    <property type="evidence" value="ECO:0007669"/>
    <property type="project" value="UniProtKB-UniRule"/>
</dbReference>
<dbReference type="GO" id="GO:0008973">
    <property type="term" value="F:phosphopentomutase activity"/>
    <property type="evidence" value="ECO:0007669"/>
    <property type="project" value="UniProtKB-UniRule"/>
</dbReference>
<dbReference type="GO" id="GO:0006018">
    <property type="term" value="P:2-deoxyribose 1-phosphate catabolic process"/>
    <property type="evidence" value="ECO:0007669"/>
    <property type="project" value="UniProtKB-UniRule"/>
</dbReference>
<dbReference type="GO" id="GO:0006015">
    <property type="term" value="P:5-phosphoribose 1-diphosphate biosynthetic process"/>
    <property type="evidence" value="ECO:0007669"/>
    <property type="project" value="UniProtKB-UniPathway"/>
</dbReference>
<dbReference type="GO" id="GO:0043094">
    <property type="term" value="P:metabolic compound salvage"/>
    <property type="evidence" value="ECO:0007669"/>
    <property type="project" value="InterPro"/>
</dbReference>
<dbReference type="GO" id="GO:0009117">
    <property type="term" value="P:nucleotide metabolic process"/>
    <property type="evidence" value="ECO:0007669"/>
    <property type="project" value="InterPro"/>
</dbReference>
<dbReference type="CDD" id="cd16009">
    <property type="entry name" value="PPM"/>
    <property type="match status" value="1"/>
</dbReference>
<dbReference type="FunFam" id="3.30.70.1250:FF:000001">
    <property type="entry name" value="Phosphopentomutase"/>
    <property type="match status" value="1"/>
</dbReference>
<dbReference type="Gene3D" id="3.40.720.10">
    <property type="entry name" value="Alkaline Phosphatase, subunit A"/>
    <property type="match status" value="1"/>
</dbReference>
<dbReference type="Gene3D" id="3.30.70.1250">
    <property type="entry name" value="Phosphopentomutase"/>
    <property type="match status" value="1"/>
</dbReference>
<dbReference type="HAMAP" id="MF_00740">
    <property type="entry name" value="Phosphopentomut"/>
    <property type="match status" value="1"/>
</dbReference>
<dbReference type="InterPro" id="IPR017850">
    <property type="entry name" value="Alkaline_phosphatase_core_sf"/>
</dbReference>
<dbReference type="InterPro" id="IPR010045">
    <property type="entry name" value="DeoB"/>
</dbReference>
<dbReference type="InterPro" id="IPR006124">
    <property type="entry name" value="Metalloenzyme"/>
</dbReference>
<dbReference type="InterPro" id="IPR024052">
    <property type="entry name" value="Phosphopentomutase_DeoB_cap_sf"/>
</dbReference>
<dbReference type="NCBIfam" id="TIGR01696">
    <property type="entry name" value="deoB"/>
    <property type="match status" value="1"/>
</dbReference>
<dbReference type="NCBIfam" id="NF003766">
    <property type="entry name" value="PRK05362.1"/>
    <property type="match status" value="1"/>
</dbReference>
<dbReference type="PANTHER" id="PTHR21110">
    <property type="entry name" value="PHOSPHOPENTOMUTASE"/>
    <property type="match status" value="1"/>
</dbReference>
<dbReference type="PANTHER" id="PTHR21110:SF0">
    <property type="entry name" value="PHOSPHOPENTOMUTASE"/>
    <property type="match status" value="1"/>
</dbReference>
<dbReference type="Pfam" id="PF01676">
    <property type="entry name" value="Metalloenzyme"/>
    <property type="match status" value="1"/>
</dbReference>
<dbReference type="PIRSF" id="PIRSF001491">
    <property type="entry name" value="Ppentomutase"/>
    <property type="match status" value="1"/>
</dbReference>
<dbReference type="SUPFAM" id="SSF53649">
    <property type="entry name" value="Alkaline phosphatase-like"/>
    <property type="match status" value="1"/>
</dbReference>
<dbReference type="SUPFAM" id="SSF143856">
    <property type="entry name" value="DeoB insert domain-like"/>
    <property type="match status" value="1"/>
</dbReference>
<accession>Q97RI6</accession>
<reference key="1">
    <citation type="journal article" date="2001" name="Science">
        <title>Complete genome sequence of a virulent isolate of Streptococcus pneumoniae.</title>
        <authorList>
            <person name="Tettelin H."/>
            <person name="Nelson K.E."/>
            <person name="Paulsen I.T."/>
            <person name="Eisen J.A."/>
            <person name="Read T.D."/>
            <person name="Peterson S.N."/>
            <person name="Heidelberg J.F."/>
            <person name="DeBoy R.T."/>
            <person name="Haft D.H."/>
            <person name="Dodson R.J."/>
            <person name="Durkin A.S."/>
            <person name="Gwinn M.L."/>
            <person name="Kolonay J.F."/>
            <person name="Nelson W.C."/>
            <person name="Peterson J.D."/>
            <person name="Umayam L.A."/>
            <person name="White O."/>
            <person name="Salzberg S.L."/>
            <person name="Lewis M.R."/>
            <person name="Radune D."/>
            <person name="Holtzapple E.K."/>
            <person name="Khouri H.M."/>
            <person name="Wolf A.M."/>
            <person name="Utterback T.R."/>
            <person name="Hansen C.L."/>
            <person name="McDonald L.A."/>
            <person name="Feldblyum T.V."/>
            <person name="Angiuoli S.V."/>
            <person name="Dickinson T."/>
            <person name="Hickey E.K."/>
            <person name="Holt I.E."/>
            <person name="Loftus B.J."/>
            <person name="Yang F."/>
            <person name="Smith H.O."/>
            <person name="Venter J.C."/>
            <person name="Dougherty B.A."/>
            <person name="Morrison D.A."/>
            <person name="Hollingshead S.K."/>
            <person name="Fraser C.M."/>
        </authorList>
    </citation>
    <scope>NUCLEOTIDE SEQUENCE [LARGE SCALE GENOMIC DNA]</scope>
    <source>
        <strain>ATCC BAA-334 / TIGR4</strain>
    </source>
</reference>